<accession>B8IZP3</accession>
<reference key="1">
    <citation type="submission" date="2009-01" db="EMBL/GenBank/DDBJ databases">
        <title>Complete sequence of Desulfovibrio desulfuricans subsp. desulfuricans str. ATCC 27774.</title>
        <authorList>
            <consortium name="US DOE Joint Genome Institute"/>
            <person name="Lucas S."/>
            <person name="Copeland A."/>
            <person name="Lapidus A."/>
            <person name="Glavina del Rio T."/>
            <person name="Tice H."/>
            <person name="Bruce D."/>
            <person name="Goodwin L."/>
            <person name="Pitluck S."/>
            <person name="Sims D."/>
            <person name="Lu M."/>
            <person name="Kiss H."/>
            <person name="Meineke L."/>
            <person name="Brettin T."/>
            <person name="Detter J.C."/>
            <person name="Han C."/>
            <person name="Larimer F."/>
            <person name="Land M."/>
            <person name="Hauser L."/>
            <person name="Kyrpides N."/>
            <person name="Ovchinnikova G."/>
            <person name="Hazen T.C."/>
        </authorList>
    </citation>
    <scope>NUCLEOTIDE SEQUENCE [LARGE SCALE GENOMIC DNA]</scope>
    <source>
        <strain>ATCC 27774 / DSM 6949 / MB</strain>
    </source>
</reference>
<organism>
    <name type="scientific">Desulfovibrio desulfuricans (strain ATCC 27774 / DSM 6949 / MB)</name>
    <dbReference type="NCBI Taxonomy" id="525146"/>
    <lineage>
        <taxon>Bacteria</taxon>
        <taxon>Pseudomonadati</taxon>
        <taxon>Thermodesulfobacteriota</taxon>
        <taxon>Desulfovibrionia</taxon>
        <taxon>Desulfovibrionales</taxon>
        <taxon>Desulfovibrionaceae</taxon>
        <taxon>Desulfovibrio</taxon>
    </lineage>
</organism>
<comment type="similarity">
    <text evidence="1">Belongs to the universal ribosomal protein uS9 family.</text>
</comment>
<gene>
    <name evidence="1" type="primary">rpsI</name>
    <name type="ordered locus">Ddes_1063</name>
</gene>
<protein>
    <recommendedName>
        <fullName evidence="1">Small ribosomal subunit protein uS9</fullName>
    </recommendedName>
    <alternativeName>
        <fullName evidence="2">30S ribosomal protein S9</fullName>
    </alternativeName>
</protein>
<feature type="chain" id="PRO_1000146448" description="Small ribosomal subunit protein uS9">
    <location>
        <begin position="1"/>
        <end position="130"/>
    </location>
</feature>
<sequence>MSEKFEYGTGRRKTATARTRIYAGSGGITVNGRSFENYFPRKTLQMIIRQPLVLAKLADKLDVRVNVAGGGVTGQAEAVRHGISRALLLVDPALRPVLKKAGFLTRDARKKERKKYGLRAARARYQYSKR</sequence>
<evidence type="ECO:0000255" key="1">
    <source>
        <dbReference type="HAMAP-Rule" id="MF_00532"/>
    </source>
</evidence>
<evidence type="ECO:0000305" key="2"/>
<keyword id="KW-0687">Ribonucleoprotein</keyword>
<keyword id="KW-0689">Ribosomal protein</keyword>
<name>RS9_DESDA</name>
<dbReference type="EMBL" id="CP001358">
    <property type="protein sequence ID" value="ACL48970.1"/>
    <property type="molecule type" value="Genomic_DNA"/>
</dbReference>
<dbReference type="SMR" id="B8IZP3"/>
<dbReference type="STRING" id="525146.Ddes_1063"/>
<dbReference type="KEGG" id="dds:Ddes_1063"/>
<dbReference type="eggNOG" id="COG0103">
    <property type="taxonomic scope" value="Bacteria"/>
</dbReference>
<dbReference type="HOGENOM" id="CLU_046483_2_1_7"/>
<dbReference type="GO" id="GO:0005737">
    <property type="term" value="C:cytoplasm"/>
    <property type="evidence" value="ECO:0007669"/>
    <property type="project" value="UniProtKB-ARBA"/>
</dbReference>
<dbReference type="GO" id="GO:0015935">
    <property type="term" value="C:small ribosomal subunit"/>
    <property type="evidence" value="ECO:0007669"/>
    <property type="project" value="TreeGrafter"/>
</dbReference>
<dbReference type="GO" id="GO:0003723">
    <property type="term" value="F:RNA binding"/>
    <property type="evidence" value="ECO:0007669"/>
    <property type="project" value="TreeGrafter"/>
</dbReference>
<dbReference type="GO" id="GO:0003735">
    <property type="term" value="F:structural constituent of ribosome"/>
    <property type="evidence" value="ECO:0007669"/>
    <property type="project" value="InterPro"/>
</dbReference>
<dbReference type="GO" id="GO:0006412">
    <property type="term" value="P:translation"/>
    <property type="evidence" value="ECO:0007669"/>
    <property type="project" value="UniProtKB-UniRule"/>
</dbReference>
<dbReference type="FunFam" id="3.30.230.10:FF:000001">
    <property type="entry name" value="30S ribosomal protein S9"/>
    <property type="match status" value="1"/>
</dbReference>
<dbReference type="Gene3D" id="3.30.230.10">
    <property type="match status" value="1"/>
</dbReference>
<dbReference type="HAMAP" id="MF_00532_B">
    <property type="entry name" value="Ribosomal_uS9_B"/>
    <property type="match status" value="1"/>
</dbReference>
<dbReference type="InterPro" id="IPR020568">
    <property type="entry name" value="Ribosomal_Su5_D2-typ_SF"/>
</dbReference>
<dbReference type="InterPro" id="IPR000754">
    <property type="entry name" value="Ribosomal_uS9"/>
</dbReference>
<dbReference type="InterPro" id="IPR023035">
    <property type="entry name" value="Ribosomal_uS9_bac/plastid"/>
</dbReference>
<dbReference type="InterPro" id="IPR020574">
    <property type="entry name" value="Ribosomal_uS9_CS"/>
</dbReference>
<dbReference type="InterPro" id="IPR014721">
    <property type="entry name" value="Ribsml_uS5_D2-typ_fold_subgr"/>
</dbReference>
<dbReference type="NCBIfam" id="NF001099">
    <property type="entry name" value="PRK00132.1"/>
    <property type="match status" value="1"/>
</dbReference>
<dbReference type="PANTHER" id="PTHR21569">
    <property type="entry name" value="RIBOSOMAL PROTEIN S9"/>
    <property type="match status" value="1"/>
</dbReference>
<dbReference type="PANTHER" id="PTHR21569:SF1">
    <property type="entry name" value="SMALL RIBOSOMAL SUBUNIT PROTEIN US9M"/>
    <property type="match status" value="1"/>
</dbReference>
<dbReference type="Pfam" id="PF00380">
    <property type="entry name" value="Ribosomal_S9"/>
    <property type="match status" value="1"/>
</dbReference>
<dbReference type="SUPFAM" id="SSF54211">
    <property type="entry name" value="Ribosomal protein S5 domain 2-like"/>
    <property type="match status" value="1"/>
</dbReference>
<dbReference type="PROSITE" id="PS00360">
    <property type="entry name" value="RIBOSOMAL_S9"/>
    <property type="match status" value="1"/>
</dbReference>
<proteinExistence type="inferred from homology"/>